<organism>
    <name type="scientific">Staurastrum punctulatum</name>
    <name type="common">Green alga</name>
    <name type="synonym">Cosmoastrum punctulatum</name>
    <dbReference type="NCBI Taxonomy" id="102822"/>
    <lineage>
        <taxon>Eukaryota</taxon>
        <taxon>Viridiplantae</taxon>
        <taxon>Streptophyta</taxon>
        <taxon>Zygnematophyceae</taxon>
        <taxon>Zygnematophycidae</taxon>
        <taxon>Desmidiales</taxon>
        <taxon>Desmidiaceae</taxon>
        <taxon>Staurastrum</taxon>
    </lineage>
</organism>
<sequence length="36" mass="4197">MLTLKLFVYTVVIFFVSLFVFGFLSNDPTRNPGRKE</sequence>
<gene>
    <name evidence="1" type="primary">psbI</name>
</gene>
<feature type="chain" id="PRO_0000275813" description="Photosystem II reaction center protein I">
    <location>
        <begin position="1"/>
        <end position="36"/>
    </location>
</feature>
<feature type="transmembrane region" description="Helical" evidence="1">
    <location>
        <begin position="4"/>
        <end position="24"/>
    </location>
</feature>
<geneLocation type="chloroplast"/>
<protein>
    <recommendedName>
        <fullName evidence="1">Photosystem II reaction center protein I</fullName>
        <shortName evidence="1">PSII-I</shortName>
    </recommendedName>
    <alternativeName>
        <fullName evidence="1">PSII 4.8 kDa protein</fullName>
    </alternativeName>
</protein>
<comment type="function">
    <text evidence="1">One of the components of the core complex of photosystem II (PSII), required for its stability and/or assembly. PSII is a light-driven water:plastoquinone oxidoreductase that uses light energy to abstract electrons from H(2)O, generating O(2) and a proton gradient subsequently used for ATP formation. It consists of a core antenna complex that captures photons, and an electron transfer chain that converts photonic excitation into a charge separation.</text>
</comment>
<comment type="subunit">
    <text evidence="1">PSII is composed of 1 copy each of membrane proteins PsbA, PsbB, PsbC, PsbD, PsbE, PsbF, PsbH, PsbI, PsbJ, PsbK, PsbL, PsbM, PsbT, PsbX, PsbY, PsbZ, Psb30/Ycf12, at least 3 peripheral proteins of the oxygen-evolving complex and a large number of cofactors. It forms dimeric complexes.</text>
</comment>
<comment type="subcellular location">
    <subcellularLocation>
        <location evidence="1">Plastid</location>
        <location evidence="1">Chloroplast thylakoid membrane</location>
        <topology evidence="1">Single-pass membrane protein</topology>
    </subcellularLocation>
</comment>
<comment type="similarity">
    <text evidence="1">Belongs to the PsbI family.</text>
</comment>
<name>PSBI_STAPU</name>
<keyword id="KW-0150">Chloroplast</keyword>
<keyword id="KW-0472">Membrane</keyword>
<keyword id="KW-0602">Photosynthesis</keyword>
<keyword id="KW-0604">Photosystem II</keyword>
<keyword id="KW-0934">Plastid</keyword>
<keyword id="KW-0674">Reaction center</keyword>
<keyword id="KW-0793">Thylakoid</keyword>
<keyword id="KW-0812">Transmembrane</keyword>
<keyword id="KW-1133">Transmembrane helix</keyword>
<accession>Q32RW7</accession>
<proteinExistence type="inferred from homology"/>
<dbReference type="EMBL" id="AY958085">
    <property type="protein sequence ID" value="AAX45728.1"/>
    <property type="molecule type" value="Genomic_DNA"/>
</dbReference>
<dbReference type="RefSeq" id="YP_636409.1">
    <property type="nucleotide sequence ID" value="NC_008116.1"/>
</dbReference>
<dbReference type="SMR" id="Q32RW7"/>
<dbReference type="GeneID" id="4108687"/>
<dbReference type="GO" id="GO:0009535">
    <property type="term" value="C:chloroplast thylakoid membrane"/>
    <property type="evidence" value="ECO:0007669"/>
    <property type="project" value="UniProtKB-SubCell"/>
</dbReference>
<dbReference type="GO" id="GO:0009539">
    <property type="term" value="C:photosystem II reaction center"/>
    <property type="evidence" value="ECO:0007669"/>
    <property type="project" value="InterPro"/>
</dbReference>
<dbReference type="GO" id="GO:0015979">
    <property type="term" value="P:photosynthesis"/>
    <property type="evidence" value="ECO:0007669"/>
    <property type="project" value="UniProtKB-UniRule"/>
</dbReference>
<dbReference type="HAMAP" id="MF_01316">
    <property type="entry name" value="PSII_PsbI"/>
    <property type="match status" value="1"/>
</dbReference>
<dbReference type="InterPro" id="IPR003686">
    <property type="entry name" value="PSII_PsbI"/>
</dbReference>
<dbReference type="InterPro" id="IPR037271">
    <property type="entry name" value="PSII_PsbI_sf"/>
</dbReference>
<dbReference type="NCBIfam" id="NF002735">
    <property type="entry name" value="PRK02655.1"/>
    <property type="match status" value="1"/>
</dbReference>
<dbReference type="PANTHER" id="PTHR35772">
    <property type="entry name" value="PHOTOSYSTEM II REACTION CENTER PROTEIN I"/>
    <property type="match status" value="1"/>
</dbReference>
<dbReference type="PANTHER" id="PTHR35772:SF1">
    <property type="entry name" value="PHOTOSYSTEM II REACTION CENTER PROTEIN I"/>
    <property type="match status" value="1"/>
</dbReference>
<dbReference type="Pfam" id="PF02532">
    <property type="entry name" value="PsbI"/>
    <property type="match status" value="1"/>
</dbReference>
<dbReference type="SUPFAM" id="SSF161041">
    <property type="entry name" value="Photosystem II reaction center protein I, PsbI"/>
    <property type="match status" value="1"/>
</dbReference>
<reference key="1">
    <citation type="journal article" date="2005" name="BMC Biol.">
        <title>The complete chloroplast DNA sequences of the charophycean green algae Staurastrum and Zygnema reveal that the chloroplast genome underwent extensive changes during the evolution of the Zygnematales.</title>
        <authorList>
            <person name="Turmel M."/>
            <person name="Otis C."/>
            <person name="Lemieux C."/>
        </authorList>
    </citation>
    <scope>NUCLEOTIDE SEQUENCE [LARGE SCALE GENOMIC DNA]</scope>
</reference>
<evidence type="ECO:0000255" key="1">
    <source>
        <dbReference type="HAMAP-Rule" id="MF_01316"/>
    </source>
</evidence>